<dbReference type="EMBL" id="CP000570">
    <property type="protein sequence ID" value="ABN84419.1"/>
    <property type="molecule type" value="Genomic_DNA"/>
</dbReference>
<dbReference type="RefSeq" id="WP_004525818.1">
    <property type="nucleotide sequence ID" value="NC_009074.1"/>
</dbReference>
<dbReference type="SMR" id="A3N473"/>
<dbReference type="KEGG" id="bpd:BURPS668_0089"/>
<dbReference type="HOGENOM" id="CLU_026910_0_1_4"/>
<dbReference type="GO" id="GO:0005737">
    <property type="term" value="C:cytoplasm"/>
    <property type="evidence" value="ECO:0007669"/>
    <property type="project" value="UniProtKB-SubCell"/>
</dbReference>
<dbReference type="GO" id="GO:0005886">
    <property type="term" value="C:plasma membrane"/>
    <property type="evidence" value="ECO:0007669"/>
    <property type="project" value="TreeGrafter"/>
</dbReference>
<dbReference type="GO" id="GO:0005524">
    <property type="term" value="F:ATP binding"/>
    <property type="evidence" value="ECO:0007669"/>
    <property type="project" value="UniProtKB-UniRule"/>
</dbReference>
<dbReference type="GO" id="GO:0016887">
    <property type="term" value="F:ATP hydrolysis activity"/>
    <property type="evidence" value="ECO:0007669"/>
    <property type="project" value="InterPro"/>
</dbReference>
<dbReference type="GO" id="GO:0003688">
    <property type="term" value="F:DNA replication origin binding"/>
    <property type="evidence" value="ECO:0007669"/>
    <property type="project" value="UniProtKB-UniRule"/>
</dbReference>
<dbReference type="GO" id="GO:0008289">
    <property type="term" value="F:lipid binding"/>
    <property type="evidence" value="ECO:0007669"/>
    <property type="project" value="UniProtKB-KW"/>
</dbReference>
<dbReference type="GO" id="GO:0006270">
    <property type="term" value="P:DNA replication initiation"/>
    <property type="evidence" value="ECO:0007669"/>
    <property type="project" value="UniProtKB-UniRule"/>
</dbReference>
<dbReference type="GO" id="GO:0006275">
    <property type="term" value="P:regulation of DNA replication"/>
    <property type="evidence" value="ECO:0007669"/>
    <property type="project" value="UniProtKB-UniRule"/>
</dbReference>
<dbReference type="CDD" id="cd00009">
    <property type="entry name" value="AAA"/>
    <property type="match status" value="1"/>
</dbReference>
<dbReference type="CDD" id="cd06571">
    <property type="entry name" value="Bac_DnaA_C"/>
    <property type="match status" value="1"/>
</dbReference>
<dbReference type="FunFam" id="1.10.8.60:FF:000003">
    <property type="entry name" value="Chromosomal replication initiator protein DnaA"/>
    <property type="match status" value="1"/>
</dbReference>
<dbReference type="FunFam" id="3.40.50.300:FF:000668">
    <property type="entry name" value="Chromosomal replication initiator protein DnaA"/>
    <property type="match status" value="1"/>
</dbReference>
<dbReference type="Gene3D" id="1.10.1750.10">
    <property type="match status" value="1"/>
</dbReference>
<dbReference type="Gene3D" id="1.10.8.60">
    <property type="match status" value="1"/>
</dbReference>
<dbReference type="Gene3D" id="3.30.300.180">
    <property type="match status" value="1"/>
</dbReference>
<dbReference type="Gene3D" id="3.40.50.300">
    <property type="entry name" value="P-loop containing nucleotide triphosphate hydrolases"/>
    <property type="match status" value="1"/>
</dbReference>
<dbReference type="HAMAP" id="MF_00377">
    <property type="entry name" value="DnaA_bact"/>
    <property type="match status" value="1"/>
</dbReference>
<dbReference type="InterPro" id="IPR003593">
    <property type="entry name" value="AAA+_ATPase"/>
</dbReference>
<dbReference type="InterPro" id="IPR001957">
    <property type="entry name" value="Chromosome_initiator_DnaA"/>
</dbReference>
<dbReference type="InterPro" id="IPR020591">
    <property type="entry name" value="Chromosome_initiator_DnaA-like"/>
</dbReference>
<dbReference type="InterPro" id="IPR018312">
    <property type="entry name" value="Chromosome_initiator_DnaA_CS"/>
</dbReference>
<dbReference type="InterPro" id="IPR013159">
    <property type="entry name" value="DnaA_C"/>
</dbReference>
<dbReference type="InterPro" id="IPR013317">
    <property type="entry name" value="DnaA_dom"/>
</dbReference>
<dbReference type="InterPro" id="IPR024633">
    <property type="entry name" value="DnaA_N_dom"/>
</dbReference>
<dbReference type="InterPro" id="IPR038454">
    <property type="entry name" value="DnaA_N_sf"/>
</dbReference>
<dbReference type="InterPro" id="IPR055199">
    <property type="entry name" value="Hda_lid"/>
</dbReference>
<dbReference type="InterPro" id="IPR027417">
    <property type="entry name" value="P-loop_NTPase"/>
</dbReference>
<dbReference type="InterPro" id="IPR010921">
    <property type="entry name" value="Trp_repressor/repl_initiator"/>
</dbReference>
<dbReference type="NCBIfam" id="TIGR00362">
    <property type="entry name" value="DnaA"/>
    <property type="match status" value="1"/>
</dbReference>
<dbReference type="PANTHER" id="PTHR30050">
    <property type="entry name" value="CHROMOSOMAL REPLICATION INITIATOR PROTEIN DNAA"/>
    <property type="match status" value="1"/>
</dbReference>
<dbReference type="PANTHER" id="PTHR30050:SF2">
    <property type="entry name" value="CHROMOSOMAL REPLICATION INITIATOR PROTEIN DNAA"/>
    <property type="match status" value="1"/>
</dbReference>
<dbReference type="Pfam" id="PF00308">
    <property type="entry name" value="Bac_DnaA"/>
    <property type="match status" value="1"/>
</dbReference>
<dbReference type="Pfam" id="PF08299">
    <property type="entry name" value="Bac_DnaA_C"/>
    <property type="match status" value="1"/>
</dbReference>
<dbReference type="Pfam" id="PF11638">
    <property type="entry name" value="DnaA_N"/>
    <property type="match status" value="1"/>
</dbReference>
<dbReference type="Pfam" id="PF22688">
    <property type="entry name" value="Hda_lid"/>
    <property type="match status" value="1"/>
</dbReference>
<dbReference type="PRINTS" id="PR00051">
    <property type="entry name" value="DNAA"/>
</dbReference>
<dbReference type="SMART" id="SM00382">
    <property type="entry name" value="AAA"/>
    <property type="match status" value="1"/>
</dbReference>
<dbReference type="SMART" id="SM00760">
    <property type="entry name" value="Bac_DnaA_C"/>
    <property type="match status" value="1"/>
</dbReference>
<dbReference type="SUPFAM" id="SSF52540">
    <property type="entry name" value="P-loop containing nucleoside triphosphate hydrolases"/>
    <property type="match status" value="1"/>
</dbReference>
<dbReference type="SUPFAM" id="SSF48295">
    <property type="entry name" value="TrpR-like"/>
    <property type="match status" value="1"/>
</dbReference>
<dbReference type="PROSITE" id="PS01008">
    <property type="entry name" value="DNAA"/>
    <property type="match status" value="1"/>
</dbReference>
<reference key="1">
    <citation type="journal article" date="2010" name="Genome Biol. Evol.">
        <title>Continuing evolution of Burkholderia mallei through genome reduction and large-scale rearrangements.</title>
        <authorList>
            <person name="Losada L."/>
            <person name="Ronning C.M."/>
            <person name="DeShazer D."/>
            <person name="Woods D."/>
            <person name="Fedorova N."/>
            <person name="Kim H.S."/>
            <person name="Shabalina S.A."/>
            <person name="Pearson T.R."/>
            <person name="Brinkac L."/>
            <person name="Tan P."/>
            <person name="Nandi T."/>
            <person name="Crabtree J."/>
            <person name="Badger J."/>
            <person name="Beckstrom-Sternberg S."/>
            <person name="Saqib M."/>
            <person name="Schutzer S.E."/>
            <person name="Keim P."/>
            <person name="Nierman W.C."/>
        </authorList>
    </citation>
    <scope>NUCLEOTIDE SEQUENCE [LARGE SCALE GENOMIC DNA]</scope>
    <source>
        <strain>668</strain>
    </source>
</reference>
<evidence type="ECO:0000255" key="1">
    <source>
        <dbReference type="HAMAP-Rule" id="MF_00377"/>
    </source>
</evidence>
<evidence type="ECO:0000256" key="2">
    <source>
        <dbReference type="SAM" id="MobiDB-lite"/>
    </source>
</evidence>
<gene>
    <name evidence="1" type="primary">dnaA</name>
    <name type="ordered locus">BURPS668_0089</name>
</gene>
<protein>
    <recommendedName>
        <fullName evidence="1">Chromosomal replication initiator protein DnaA</fullName>
    </recommendedName>
</protein>
<name>DNAA_BURP6</name>
<sequence>MNDFWQHCSALLERELTPQQYVTWIKPLAPVAFDAAANTLSIAAPNRFKLDWVKSQFSGRISDLARDFWNAPIEVQFVLDPKAGQRSPAGATPLAPRAPLPSANPAPVAPGPASAPAVDAHAPAPAGMNAATAAAVAAAQAAQAAQANAAALNADEAADLDLPSLTAHEAAAGRRTWRPGAANANSEAADSMYERSKLNPVLTFDNFVTGKANQLARAAAIQVADNPGISYNPLFLYGGVGLGKTHLIHAIGNQLLLDKPGARIRYIHAEQYVSDVVKAYQRKAFDDFKRYYHSLDLLLIDDIQFFSGKSRTQEEFFYAFEALVANKAQVIITSDTYPKEISGIDDRLISRFDSGLTVAIEPPELEMRVAILMRKAQSEGVSLSEDVAFFVAKHLRSNVRELEGALRKILAYSKFHGREITIELTKEALKDLLTVQNRQISVENIQKTVADFYNIKVADMYSKKRPANIARPRQIAMYLAKELTQKSLPEIGELFGGRDHTTVLHAVRKIADERGKDAQLNHELHVLEQTLKG</sequence>
<keyword id="KW-0067">ATP-binding</keyword>
<keyword id="KW-0963">Cytoplasm</keyword>
<keyword id="KW-0235">DNA replication</keyword>
<keyword id="KW-0238">DNA-binding</keyword>
<keyword id="KW-0446">Lipid-binding</keyword>
<keyword id="KW-0547">Nucleotide-binding</keyword>
<feature type="chain" id="PRO_1000048620" description="Chromosomal replication initiator protein DnaA">
    <location>
        <begin position="1"/>
        <end position="533"/>
    </location>
</feature>
<feature type="region of interest" description="Domain I, interacts with DnaA modulators" evidence="1">
    <location>
        <begin position="1"/>
        <end position="72"/>
    </location>
</feature>
<feature type="region of interest" description="Domain II" evidence="1">
    <location>
        <begin position="72"/>
        <end position="196"/>
    </location>
</feature>
<feature type="region of interest" description="Disordered" evidence="2">
    <location>
        <begin position="83"/>
        <end position="120"/>
    </location>
</feature>
<feature type="region of interest" description="Domain III, AAA+ region" evidence="1">
    <location>
        <begin position="197"/>
        <end position="413"/>
    </location>
</feature>
<feature type="region of interest" description="Domain IV, binds dsDNA" evidence="1">
    <location>
        <begin position="414"/>
        <end position="533"/>
    </location>
</feature>
<feature type="compositionally biased region" description="Pro residues" evidence="2">
    <location>
        <begin position="96"/>
        <end position="110"/>
    </location>
</feature>
<feature type="compositionally biased region" description="Low complexity" evidence="2">
    <location>
        <begin position="111"/>
        <end position="120"/>
    </location>
</feature>
<feature type="binding site" evidence="1">
    <location>
        <position position="241"/>
    </location>
    <ligand>
        <name>ATP</name>
        <dbReference type="ChEBI" id="CHEBI:30616"/>
    </ligand>
</feature>
<feature type="binding site" evidence="1">
    <location>
        <position position="243"/>
    </location>
    <ligand>
        <name>ATP</name>
        <dbReference type="ChEBI" id="CHEBI:30616"/>
    </ligand>
</feature>
<feature type="binding site" evidence="1">
    <location>
        <position position="244"/>
    </location>
    <ligand>
        <name>ATP</name>
        <dbReference type="ChEBI" id="CHEBI:30616"/>
    </ligand>
</feature>
<feature type="binding site" evidence="1">
    <location>
        <position position="245"/>
    </location>
    <ligand>
        <name>ATP</name>
        <dbReference type="ChEBI" id="CHEBI:30616"/>
    </ligand>
</feature>
<proteinExistence type="inferred from homology"/>
<accession>A3N473</accession>
<organism>
    <name type="scientific">Burkholderia pseudomallei (strain 668)</name>
    <dbReference type="NCBI Taxonomy" id="320373"/>
    <lineage>
        <taxon>Bacteria</taxon>
        <taxon>Pseudomonadati</taxon>
        <taxon>Pseudomonadota</taxon>
        <taxon>Betaproteobacteria</taxon>
        <taxon>Burkholderiales</taxon>
        <taxon>Burkholderiaceae</taxon>
        <taxon>Burkholderia</taxon>
        <taxon>pseudomallei group</taxon>
    </lineage>
</organism>
<comment type="function">
    <text evidence="1">Plays an essential role in the initiation and regulation of chromosomal replication. ATP-DnaA binds to the origin of replication (oriC) to initiate formation of the DNA replication initiation complex once per cell cycle. Binds the DnaA box (a 9 base pair repeat at the origin) and separates the double-stranded (ds)DNA. Forms a right-handed helical filament on oriC DNA; dsDNA binds to the exterior of the filament while single-stranded (ss)DNA is stabiized in the filament's interior. The ATP-DnaA-oriC complex binds and stabilizes one strand of the AT-rich DNA unwinding element (DUE), permitting loading of DNA polymerase. After initiation quickly degrades to an ADP-DnaA complex that is not apt for DNA replication. Binds acidic phospholipids.</text>
</comment>
<comment type="subunit">
    <text evidence="1">Oligomerizes as a right-handed, spiral filament on DNA at oriC.</text>
</comment>
<comment type="subcellular location">
    <subcellularLocation>
        <location evidence="1">Cytoplasm</location>
    </subcellularLocation>
</comment>
<comment type="domain">
    <text evidence="1">Domain I is involved in oligomerization and binding regulators, domain II is flexibile and of varying length in different bacteria, domain III forms the AAA+ region, while domain IV binds dsDNA.</text>
</comment>
<comment type="similarity">
    <text evidence="1">Belongs to the DnaA family.</text>
</comment>